<reference key="1">
    <citation type="journal article" date="2005" name="BMC Genomics">
        <title>Bacterial genome adaptation to niches: divergence of the potential virulence genes in three Burkholderia species of different survival strategies.</title>
        <authorList>
            <person name="Kim H.S."/>
            <person name="Schell M.A."/>
            <person name="Yu Y."/>
            <person name="Ulrich R.L."/>
            <person name="Sarria S.H."/>
            <person name="Nierman W.C."/>
            <person name="DeShazer D."/>
        </authorList>
    </citation>
    <scope>NUCLEOTIDE SEQUENCE [LARGE SCALE GENOMIC DNA]</scope>
    <source>
        <strain>ATCC 700388 / DSM 13276 / CCUG 48851 / CIP 106301 / E264</strain>
    </source>
</reference>
<protein>
    <recommendedName>
        <fullName evidence="1">Ketol-acid reductoisomerase (NADP(+))</fullName>
        <shortName evidence="1">KARI</shortName>
        <ecNumber evidence="1">1.1.1.86</ecNumber>
    </recommendedName>
    <alternativeName>
        <fullName evidence="1">Acetohydroxy-acid isomeroreductase</fullName>
        <shortName evidence="1">AHIR</shortName>
    </alternativeName>
    <alternativeName>
        <fullName evidence="1">Alpha-keto-beta-hydroxylacyl reductoisomerase</fullName>
    </alternativeName>
    <alternativeName>
        <fullName evidence="1">Ketol-acid reductoisomerase type 1</fullName>
    </alternativeName>
    <alternativeName>
        <fullName evidence="1">Ketol-acid reductoisomerase type I</fullName>
    </alternativeName>
</protein>
<accession>Q2SZP8</accession>
<evidence type="ECO:0000255" key="1">
    <source>
        <dbReference type="HAMAP-Rule" id="MF_00435"/>
    </source>
</evidence>
<evidence type="ECO:0000255" key="2">
    <source>
        <dbReference type="PROSITE-ProRule" id="PRU01197"/>
    </source>
</evidence>
<evidence type="ECO:0000255" key="3">
    <source>
        <dbReference type="PROSITE-ProRule" id="PRU01198"/>
    </source>
</evidence>
<name>ILVC_BURTA</name>
<organism>
    <name type="scientific">Burkholderia thailandensis (strain ATCC 700388 / DSM 13276 / CCUG 48851 / CIP 106301 / E264)</name>
    <dbReference type="NCBI Taxonomy" id="271848"/>
    <lineage>
        <taxon>Bacteria</taxon>
        <taxon>Pseudomonadati</taxon>
        <taxon>Pseudomonadota</taxon>
        <taxon>Betaproteobacteria</taxon>
        <taxon>Burkholderiales</taxon>
        <taxon>Burkholderiaceae</taxon>
        <taxon>Burkholderia</taxon>
        <taxon>pseudomallei group</taxon>
    </lineage>
</organism>
<proteinExistence type="inferred from homology"/>
<dbReference type="EC" id="1.1.1.86" evidence="1"/>
<dbReference type="EMBL" id="CP000086">
    <property type="protein sequence ID" value="ABC36606.1"/>
    <property type="molecule type" value="Genomic_DNA"/>
</dbReference>
<dbReference type="RefSeq" id="WP_009892208.1">
    <property type="nucleotide sequence ID" value="NZ_CP008785.1"/>
</dbReference>
<dbReference type="SMR" id="Q2SZP8"/>
<dbReference type="GeneID" id="45120799"/>
<dbReference type="KEGG" id="bte:BTH_I1047"/>
<dbReference type="HOGENOM" id="CLU_033821_0_1_4"/>
<dbReference type="UniPathway" id="UPA00047">
    <property type="reaction ID" value="UER00056"/>
</dbReference>
<dbReference type="UniPathway" id="UPA00049">
    <property type="reaction ID" value="UER00060"/>
</dbReference>
<dbReference type="Proteomes" id="UP000001930">
    <property type="component" value="Chromosome I"/>
</dbReference>
<dbReference type="GO" id="GO:0005829">
    <property type="term" value="C:cytosol"/>
    <property type="evidence" value="ECO:0007669"/>
    <property type="project" value="TreeGrafter"/>
</dbReference>
<dbReference type="GO" id="GO:0004455">
    <property type="term" value="F:ketol-acid reductoisomerase activity"/>
    <property type="evidence" value="ECO:0007669"/>
    <property type="project" value="UniProtKB-UniRule"/>
</dbReference>
<dbReference type="GO" id="GO:0000287">
    <property type="term" value="F:magnesium ion binding"/>
    <property type="evidence" value="ECO:0007669"/>
    <property type="project" value="UniProtKB-UniRule"/>
</dbReference>
<dbReference type="GO" id="GO:0050661">
    <property type="term" value="F:NADP binding"/>
    <property type="evidence" value="ECO:0007669"/>
    <property type="project" value="InterPro"/>
</dbReference>
<dbReference type="GO" id="GO:0009097">
    <property type="term" value="P:isoleucine biosynthetic process"/>
    <property type="evidence" value="ECO:0007669"/>
    <property type="project" value="UniProtKB-UniRule"/>
</dbReference>
<dbReference type="GO" id="GO:0009099">
    <property type="term" value="P:L-valine biosynthetic process"/>
    <property type="evidence" value="ECO:0007669"/>
    <property type="project" value="UniProtKB-UniRule"/>
</dbReference>
<dbReference type="FunFam" id="3.40.50.720:FF:000023">
    <property type="entry name" value="Ketol-acid reductoisomerase (NADP(+))"/>
    <property type="match status" value="1"/>
</dbReference>
<dbReference type="Gene3D" id="6.10.240.10">
    <property type="match status" value="1"/>
</dbReference>
<dbReference type="Gene3D" id="3.40.50.720">
    <property type="entry name" value="NAD(P)-binding Rossmann-like Domain"/>
    <property type="match status" value="1"/>
</dbReference>
<dbReference type="HAMAP" id="MF_00435">
    <property type="entry name" value="IlvC"/>
    <property type="match status" value="1"/>
</dbReference>
<dbReference type="InterPro" id="IPR008927">
    <property type="entry name" value="6-PGluconate_DH-like_C_sf"/>
</dbReference>
<dbReference type="InterPro" id="IPR013023">
    <property type="entry name" value="KARI"/>
</dbReference>
<dbReference type="InterPro" id="IPR000506">
    <property type="entry name" value="KARI_C"/>
</dbReference>
<dbReference type="InterPro" id="IPR013116">
    <property type="entry name" value="KARI_N"/>
</dbReference>
<dbReference type="InterPro" id="IPR014359">
    <property type="entry name" value="KARI_prok"/>
</dbReference>
<dbReference type="InterPro" id="IPR036291">
    <property type="entry name" value="NAD(P)-bd_dom_sf"/>
</dbReference>
<dbReference type="NCBIfam" id="TIGR00465">
    <property type="entry name" value="ilvC"/>
    <property type="match status" value="1"/>
</dbReference>
<dbReference type="NCBIfam" id="NF004017">
    <property type="entry name" value="PRK05479.1"/>
    <property type="match status" value="1"/>
</dbReference>
<dbReference type="NCBIfam" id="NF009940">
    <property type="entry name" value="PRK13403.1"/>
    <property type="match status" value="1"/>
</dbReference>
<dbReference type="PANTHER" id="PTHR21371">
    <property type="entry name" value="KETOL-ACID REDUCTOISOMERASE, MITOCHONDRIAL"/>
    <property type="match status" value="1"/>
</dbReference>
<dbReference type="PANTHER" id="PTHR21371:SF1">
    <property type="entry name" value="KETOL-ACID REDUCTOISOMERASE, MITOCHONDRIAL"/>
    <property type="match status" value="1"/>
</dbReference>
<dbReference type="Pfam" id="PF01450">
    <property type="entry name" value="KARI_C"/>
    <property type="match status" value="1"/>
</dbReference>
<dbReference type="Pfam" id="PF07991">
    <property type="entry name" value="KARI_N"/>
    <property type="match status" value="1"/>
</dbReference>
<dbReference type="PIRSF" id="PIRSF000116">
    <property type="entry name" value="IlvC_gammaproteo"/>
    <property type="match status" value="1"/>
</dbReference>
<dbReference type="SUPFAM" id="SSF48179">
    <property type="entry name" value="6-phosphogluconate dehydrogenase C-terminal domain-like"/>
    <property type="match status" value="1"/>
</dbReference>
<dbReference type="SUPFAM" id="SSF51735">
    <property type="entry name" value="NAD(P)-binding Rossmann-fold domains"/>
    <property type="match status" value="1"/>
</dbReference>
<dbReference type="PROSITE" id="PS51851">
    <property type="entry name" value="KARI_C"/>
    <property type="match status" value="1"/>
</dbReference>
<dbReference type="PROSITE" id="PS51850">
    <property type="entry name" value="KARI_N"/>
    <property type="match status" value="1"/>
</dbReference>
<feature type="chain" id="PRO_0000252753" description="Ketol-acid reductoisomerase (NADP(+))">
    <location>
        <begin position="1"/>
        <end position="338"/>
    </location>
</feature>
<feature type="domain" description="KARI N-terminal Rossmann" evidence="2">
    <location>
        <begin position="1"/>
        <end position="181"/>
    </location>
</feature>
<feature type="domain" description="KARI C-terminal knotted" evidence="3">
    <location>
        <begin position="182"/>
        <end position="327"/>
    </location>
</feature>
<feature type="active site" evidence="1">
    <location>
        <position position="107"/>
    </location>
</feature>
<feature type="binding site" evidence="1">
    <location>
        <begin position="24"/>
        <end position="27"/>
    </location>
    <ligand>
        <name>NADP(+)</name>
        <dbReference type="ChEBI" id="CHEBI:58349"/>
    </ligand>
</feature>
<feature type="binding site" evidence="1">
    <location>
        <position position="47"/>
    </location>
    <ligand>
        <name>NADP(+)</name>
        <dbReference type="ChEBI" id="CHEBI:58349"/>
    </ligand>
</feature>
<feature type="binding site" evidence="1">
    <location>
        <position position="52"/>
    </location>
    <ligand>
        <name>NADP(+)</name>
        <dbReference type="ChEBI" id="CHEBI:58349"/>
    </ligand>
</feature>
<feature type="binding site" evidence="1">
    <location>
        <position position="133"/>
    </location>
    <ligand>
        <name>NADP(+)</name>
        <dbReference type="ChEBI" id="CHEBI:58349"/>
    </ligand>
</feature>
<feature type="binding site" evidence="1">
    <location>
        <position position="190"/>
    </location>
    <ligand>
        <name>Mg(2+)</name>
        <dbReference type="ChEBI" id="CHEBI:18420"/>
        <label>1</label>
    </ligand>
</feature>
<feature type="binding site" evidence="1">
    <location>
        <position position="190"/>
    </location>
    <ligand>
        <name>Mg(2+)</name>
        <dbReference type="ChEBI" id="CHEBI:18420"/>
        <label>2</label>
    </ligand>
</feature>
<feature type="binding site" evidence="1">
    <location>
        <position position="194"/>
    </location>
    <ligand>
        <name>Mg(2+)</name>
        <dbReference type="ChEBI" id="CHEBI:18420"/>
        <label>1</label>
    </ligand>
</feature>
<feature type="binding site" evidence="1">
    <location>
        <position position="226"/>
    </location>
    <ligand>
        <name>Mg(2+)</name>
        <dbReference type="ChEBI" id="CHEBI:18420"/>
        <label>2</label>
    </ligand>
</feature>
<feature type="binding site" evidence="1">
    <location>
        <position position="230"/>
    </location>
    <ligand>
        <name>Mg(2+)</name>
        <dbReference type="ChEBI" id="CHEBI:18420"/>
        <label>2</label>
    </ligand>
</feature>
<feature type="binding site" evidence="1">
    <location>
        <position position="251"/>
    </location>
    <ligand>
        <name>substrate</name>
    </ligand>
</feature>
<comment type="function">
    <text evidence="1">Involved in the biosynthesis of branched-chain amino acids (BCAA). Catalyzes an alkyl-migration followed by a ketol-acid reduction of (S)-2-acetolactate (S2AL) to yield (R)-2,3-dihydroxy-isovalerate. In the isomerase reaction, S2AL is rearranged via a Mg-dependent methyl migration to produce 3-hydroxy-3-methyl-2-ketobutyrate (HMKB). In the reductase reaction, this 2-ketoacid undergoes a metal-dependent reduction by NADPH to yield (R)-2,3-dihydroxy-isovalerate.</text>
</comment>
<comment type="catalytic activity">
    <reaction evidence="1">
        <text>(2R)-2,3-dihydroxy-3-methylbutanoate + NADP(+) = (2S)-2-acetolactate + NADPH + H(+)</text>
        <dbReference type="Rhea" id="RHEA:22068"/>
        <dbReference type="ChEBI" id="CHEBI:15378"/>
        <dbReference type="ChEBI" id="CHEBI:49072"/>
        <dbReference type="ChEBI" id="CHEBI:57783"/>
        <dbReference type="ChEBI" id="CHEBI:58349"/>
        <dbReference type="ChEBI" id="CHEBI:58476"/>
        <dbReference type="EC" id="1.1.1.86"/>
    </reaction>
</comment>
<comment type="catalytic activity">
    <reaction evidence="1">
        <text>(2R,3R)-2,3-dihydroxy-3-methylpentanoate + NADP(+) = (S)-2-ethyl-2-hydroxy-3-oxobutanoate + NADPH + H(+)</text>
        <dbReference type="Rhea" id="RHEA:13493"/>
        <dbReference type="ChEBI" id="CHEBI:15378"/>
        <dbReference type="ChEBI" id="CHEBI:49256"/>
        <dbReference type="ChEBI" id="CHEBI:49258"/>
        <dbReference type="ChEBI" id="CHEBI:57783"/>
        <dbReference type="ChEBI" id="CHEBI:58349"/>
        <dbReference type="EC" id="1.1.1.86"/>
    </reaction>
</comment>
<comment type="cofactor">
    <cofactor evidence="1">
        <name>Mg(2+)</name>
        <dbReference type="ChEBI" id="CHEBI:18420"/>
    </cofactor>
    <text evidence="1">Binds 2 magnesium ions per subunit.</text>
</comment>
<comment type="pathway">
    <text evidence="1">Amino-acid biosynthesis; L-isoleucine biosynthesis; L-isoleucine from 2-oxobutanoate: step 2/4.</text>
</comment>
<comment type="pathway">
    <text evidence="1">Amino-acid biosynthesis; L-valine biosynthesis; L-valine from pyruvate: step 2/4.</text>
</comment>
<comment type="similarity">
    <text evidence="1">Belongs to the ketol-acid reductoisomerase family.</text>
</comment>
<gene>
    <name evidence="1" type="primary">ilvC</name>
    <name type="ordered locus">BTH_I1047</name>
</gene>
<sequence>MKVFYDKDADLSLIKGKQVTIIGYGSQGHAHALNLKDSGVNVTVGLRRGGASWSKAENAGLAVKEVAEAVKGADVVMMLLPDEQIAAVYAQEVHANIKEGATLAFAHGFNVHYGQVIPRADLDVIMVAPKAPGHTVRGTYAQGGGVPHLIAVAQDKSGAARDIALSYAAANGGGRAGIIETNFREETETDLFGEQAVLCGGTVELIKAGFETLVEAGYAPEMAYFECLHELKLIVDLIYEGGIANMNYSISNNAEYGEYVTGPRVVTEETKKAMKQCLTDIQTGEYAKSFILENKAGAPTLQSRRRLTAEHQIEQVGSKLRAMMPWIAKNKLVDQSKN</sequence>
<keyword id="KW-0028">Amino-acid biosynthesis</keyword>
<keyword id="KW-0100">Branched-chain amino acid biosynthesis</keyword>
<keyword id="KW-0460">Magnesium</keyword>
<keyword id="KW-0479">Metal-binding</keyword>
<keyword id="KW-0521">NADP</keyword>
<keyword id="KW-0560">Oxidoreductase</keyword>